<name>MDTI_SALDC</name>
<comment type="function">
    <text evidence="1">Catalyzes the excretion of spermidine.</text>
</comment>
<comment type="subunit">
    <text evidence="1">Forms a complex with MdtJ.</text>
</comment>
<comment type="subcellular location">
    <subcellularLocation>
        <location evidence="1">Cell inner membrane</location>
        <topology evidence="1">Multi-pass membrane protein</topology>
    </subcellularLocation>
</comment>
<comment type="similarity">
    <text evidence="1">Belongs to the drug/metabolite transporter (DMT) superfamily. Small multidrug resistance (SMR) (TC 2.A.7.1) family. MdtI subfamily.</text>
</comment>
<accession>B5FHS1</accession>
<keyword id="KW-0997">Cell inner membrane</keyword>
<keyword id="KW-1003">Cell membrane</keyword>
<keyword id="KW-0472">Membrane</keyword>
<keyword id="KW-0812">Transmembrane</keyword>
<keyword id="KW-1133">Transmembrane helix</keyword>
<keyword id="KW-0813">Transport</keyword>
<protein>
    <recommendedName>
        <fullName evidence="1">Spermidine export protein MdtI</fullName>
    </recommendedName>
</protein>
<gene>
    <name evidence="1" type="primary">mdtI</name>
    <name type="ordered locus">SeD_A1857</name>
</gene>
<dbReference type="EMBL" id="CP001144">
    <property type="protein sequence ID" value="ACH76279.1"/>
    <property type="molecule type" value="Genomic_DNA"/>
</dbReference>
<dbReference type="RefSeq" id="WP_001183821.1">
    <property type="nucleotide sequence ID" value="NC_011205.1"/>
</dbReference>
<dbReference type="SMR" id="B5FHS1"/>
<dbReference type="KEGG" id="sed:SeD_A1857"/>
<dbReference type="HOGENOM" id="CLU_133067_0_4_6"/>
<dbReference type="Proteomes" id="UP000008322">
    <property type="component" value="Chromosome"/>
</dbReference>
<dbReference type="GO" id="GO:0005886">
    <property type="term" value="C:plasma membrane"/>
    <property type="evidence" value="ECO:0007669"/>
    <property type="project" value="UniProtKB-SubCell"/>
</dbReference>
<dbReference type="GO" id="GO:0015199">
    <property type="term" value="F:amino-acid betaine transmembrane transporter activity"/>
    <property type="evidence" value="ECO:0007669"/>
    <property type="project" value="TreeGrafter"/>
</dbReference>
<dbReference type="GO" id="GO:0015297">
    <property type="term" value="F:antiporter activity"/>
    <property type="evidence" value="ECO:0007669"/>
    <property type="project" value="TreeGrafter"/>
</dbReference>
<dbReference type="GO" id="GO:0015220">
    <property type="term" value="F:choline transmembrane transporter activity"/>
    <property type="evidence" value="ECO:0007669"/>
    <property type="project" value="TreeGrafter"/>
</dbReference>
<dbReference type="GO" id="GO:0015606">
    <property type="term" value="F:spermidine transmembrane transporter activity"/>
    <property type="evidence" value="ECO:0007669"/>
    <property type="project" value="UniProtKB-UniRule"/>
</dbReference>
<dbReference type="GO" id="GO:0031460">
    <property type="term" value="P:glycine betaine transport"/>
    <property type="evidence" value="ECO:0007669"/>
    <property type="project" value="TreeGrafter"/>
</dbReference>
<dbReference type="FunFam" id="1.10.3730.20:FF:000001">
    <property type="entry name" value="Quaternary ammonium compound resistance transporter SugE"/>
    <property type="match status" value="1"/>
</dbReference>
<dbReference type="Gene3D" id="1.10.3730.20">
    <property type="match status" value="1"/>
</dbReference>
<dbReference type="HAMAP" id="MF_01597">
    <property type="entry name" value="MdtI"/>
    <property type="match status" value="1"/>
</dbReference>
<dbReference type="InterPro" id="IPR000390">
    <property type="entry name" value="Small_drug/metabolite_transptr"/>
</dbReference>
<dbReference type="InterPro" id="IPR045324">
    <property type="entry name" value="Small_multidrug_res"/>
</dbReference>
<dbReference type="InterPro" id="IPR023737">
    <property type="entry name" value="Spermidine_export_MdtI"/>
</dbReference>
<dbReference type="NCBIfam" id="NF007934">
    <property type="entry name" value="PRK10650.1"/>
    <property type="match status" value="1"/>
</dbReference>
<dbReference type="PANTHER" id="PTHR30561">
    <property type="entry name" value="SMR FAMILY PROTON-DEPENDENT DRUG EFFLUX TRANSPORTER SUGE"/>
    <property type="match status" value="1"/>
</dbReference>
<dbReference type="PANTHER" id="PTHR30561:SF6">
    <property type="entry name" value="SPERMIDINE EXPORT PROTEIN MDTI"/>
    <property type="match status" value="1"/>
</dbReference>
<dbReference type="Pfam" id="PF00893">
    <property type="entry name" value="Multi_Drug_Res"/>
    <property type="match status" value="1"/>
</dbReference>
<dbReference type="SUPFAM" id="SSF103481">
    <property type="entry name" value="Multidrug resistance efflux transporter EmrE"/>
    <property type="match status" value="1"/>
</dbReference>
<reference key="1">
    <citation type="journal article" date="2011" name="J. Bacteriol.">
        <title>Comparative genomics of 28 Salmonella enterica isolates: evidence for CRISPR-mediated adaptive sublineage evolution.</title>
        <authorList>
            <person name="Fricke W.F."/>
            <person name="Mammel M.K."/>
            <person name="McDermott P.F."/>
            <person name="Tartera C."/>
            <person name="White D.G."/>
            <person name="Leclerc J.E."/>
            <person name="Ravel J."/>
            <person name="Cebula T.A."/>
        </authorList>
    </citation>
    <scope>NUCLEOTIDE SEQUENCE [LARGE SCALE GENOMIC DNA]</scope>
    <source>
        <strain>CT_02021853</strain>
    </source>
</reference>
<organism>
    <name type="scientific">Salmonella dublin (strain CT_02021853)</name>
    <dbReference type="NCBI Taxonomy" id="439851"/>
    <lineage>
        <taxon>Bacteria</taxon>
        <taxon>Pseudomonadati</taxon>
        <taxon>Pseudomonadota</taxon>
        <taxon>Gammaproteobacteria</taxon>
        <taxon>Enterobacterales</taxon>
        <taxon>Enterobacteriaceae</taxon>
        <taxon>Salmonella</taxon>
    </lineage>
</organism>
<proteinExistence type="inferred from homology"/>
<sequence>MQQFEWIHGAWLGLAIMLEIAANVLLKFSDGFRRKCYGILSLAAVLAAFSALSQAVKGIDLSVAYALWGGFGIAATLAAGWVLFGQRLNPKGWVGVILLLAGMVMIKFA</sequence>
<evidence type="ECO:0000255" key="1">
    <source>
        <dbReference type="HAMAP-Rule" id="MF_01597"/>
    </source>
</evidence>
<feature type="chain" id="PRO_1000197320" description="Spermidine export protein MdtI">
    <location>
        <begin position="1"/>
        <end position="109"/>
    </location>
</feature>
<feature type="transmembrane region" description="Helical" evidence="1">
    <location>
        <begin position="6"/>
        <end position="26"/>
    </location>
</feature>
<feature type="transmembrane region" description="Helical" evidence="1">
    <location>
        <begin position="36"/>
        <end position="56"/>
    </location>
</feature>
<feature type="transmembrane region" description="Helical" evidence="1">
    <location>
        <begin position="64"/>
        <end position="84"/>
    </location>
</feature>
<feature type="transmembrane region" description="Helical" evidence="1">
    <location>
        <begin position="88"/>
        <end position="108"/>
    </location>
</feature>